<comment type="function">
    <text evidence="1">Catalyzes the conversion of 3-deoxy-D-arabino-heptulosonate 7-phosphate (DAHP) to dehydroquinate (DHQ).</text>
</comment>
<comment type="catalytic activity">
    <reaction evidence="1">
        <text>7-phospho-2-dehydro-3-deoxy-D-arabino-heptonate = 3-dehydroquinate + phosphate</text>
        <dbReference type="Rhea" id="RHEA:21968"/>
        <dbReference type="ChEBI" id="CHEBI:32364"/>
        <dbReference type="ChEBI" id="CHEBI:43474"/>
        <dbReference type="ChEBI" id="CHEBI:58394"/>
        <dbReference type="EC" id="4.2.3.4"/>
    </reaction>
</comment>
<comment type="cofactor">
    <cofactor evidence="1">
        <name>Co(2+)</name>
        <dbReference type="ChEBI" id="CHEBI:48828"/>
    </cofactor>
    <cofactor evidence="1">
        <name>Zn(2+)</name>
        <dbReference type="ChEBI" id="CHEBI:29105"/>
    </cofactor>
    <text evidence="1">Binds 1 divalent metal cation per subunit. Can use either Co(2+) or Zn(2+).</text>
</comment>
<comment type="cofactor">
    <cofactor evidence="1">
        <name>NAD(+)</name>
        <dbReference type="ChEBI" id="CHEBI:57540"/>
    </cofactor>
</comment>
<comment type="pathway">
    <text evidence="1">Metabolic intermediate biosynthesis; chorismate biosynthesis; chorismate from D-erythrose 4-phosphate and phosphoenolpyruvate: step 2/7.</text>
</comment>
<comment type="subcellular location">
    <subcellularLocation>
        <location evidence="1">Cytoplasm</location>
    </subcellularLocation>
</comment>
<comment type="similarity">
    <text evidence="1">Belongs to the sugar phosphate cyclases superfamily. Dehydroquinate synthase family.</text>
</comment>
<sequence length="361" mass="40256">MENIHIQTKSKEYDVHVGREALSHLTTLIQKMNPAVSNIMIISDEAVASLHLQTAVDALQVEQKVFSFVVPSGEKEKSFENFYEAHTSALENKLDRNSLIIALGGGMIGDLAGFVAASFMRGIRFVQVPTTLLAHDSAVGGKVAINHPLGKNMIGAFHQPEAVVYHTPFLHSLPEKEWRSGYAEVIKHALIGDVELYHWLKEEVQTLTDLRDEKLIHILTKAIPVKANIVSQDETEKGIRAHLNFGHTLGHALEKELGYGNITHGDGVAVGMLFAMFLSEQVYKVDLSYEEMKQWFLKYGYPKMPSDLNVERLVQLMKQDKKANAGTIHMVLMQEYGGVNVVSISDETVHIALEAFQKDMV</sequence>
<accession>A9VMC6</accession>
<evidence type="ECO:0000255" key="1">
    <source>
        <dbReference type="HAMAP-Rule" id="MF_00110"/>
    </source>
</evidence>
<dbReference type="EC" id="4.2.3.4" evidence="1"/>
<dbReference type="EMBL" id="CP000903">
    <property type="protein sequence ID" value="ABY42688.1"/>
    <property type="molecule type" value="Genomic_DNA"/>
</dbReference>
<dbReference type="RefSeq" id="WP_012260633.1">
    <property type="nucleotide sequence ID" value="NC_010184.1"/>
</dbReference>
<dbReference type="SMR" id="A9VMC6"/>
<dbReference type="KEGG" id="bwe:BcerKBAB4_1441"/>
<dbReference type="eggNOG" id="COG0337">
    <property type="taxonomic scope" value="Bacteria"/>
</dbReference>
<dbReference type="HOGENOM" id="CLU_001201_0_2_9"/>
<dbReference type="UniPathway" id="UPA00053">
    <property type="reaction ID" value="UER00085"/>
</dbReference>
<dbReference type="Proteomes" id="UP000002154">
    <property type="component" value="Chromosome"/>
</dbReference>
<dbReference type="GO" id="GO:0005737">
    <property type="term" value="C:cytoplasm"/>
    <property type="evidence" value="ECO:0007669"/>
    <property type="project" value="UniProtKB-SubCell"/>
</dbReference>
<dbReference type="GO" id="GO:0003856">
    <property type="term" value="F:3-dehydroquinate synthase activity"/>
    <property type="evidence" value="ECO:0007669"/>
    <property type="project" value="UniProtKB-UniRule"/>
</dbReference>
<dbReference type="GO" id="GO:0046872">
    <property type="term" value="F:metal ion binding"/>
    <property type="evidence" value="ECO:0007669"/>
    <property type="project" value="UniProtKB-KW"/>
</dbReference>
<dbReference type="GO" id="GO:0000166">
    <property type="term" value="F:nucleotide binding"/>
    <property type="evidence" value="ECO:0007669"/>
    <property type="project" value="UniProtKB-KW"/>
</dbReference>
<dbReference type="GO" id="GO:0008652">
    <property type="term" value="P:amino acid biosynthetic process"/>
    <property type="evidence" value="ECO:0007669"/>
    <property type="project" value="UniProtKB-KW"/>
</dbReference>
<dbReference type="GO" id="GO:0009073">
    <property type="term" value="P:aromatic amino acid family biosynthetic process"/>
    <property type="evidence" value="ECO:0007669"/>
    <property type="project" value="UniProtKB-KW"/>
</dbReference>
<dbReference type="GO" id="GO:0009423">
    <property type="term" value="P:chorismate biosynthetic process"/>
    <property type="evidence" value="ECO:0007669"/>
    <property type="project" value="UniProtKB-UniRule"/>
</dbReference>
<dbReference type="CDD" id="cd08195">
    <property type="entry name" value="DHQS"/>
    <property type="match status" value="1"/>
</dbReference>
<dbReference type="FunFam" id="3.40.50.1970:FF:000001">
    <property type="entry name" value="3-dehydroquinate synthase"/>
    <property type="match status" value="1"/>
</dbReference>
<dbReference type="Gene3D" id="3.40.50.1970">
    <property type="match status" value="1"/>
</dbReference>
<dbReference type="Gene3D" id="1.20.1090.10">
    <property type="entry name" value="Dehydroquinate synthase-like - alpha domain"/>
    <property type="match status" value="1"/>
</dbReference>
<dbReference type="HAMAP" id="MF_00110">
    <property type="entry name" value="DHQ_synthase"/>
    <property type="match status" value="1"/>
</dbReference>
<dbReference type="InterPro" id="IPR050071">
    <property type="entry name" value="Dehydroquinate_synthase"/>
</dbReference>
<dbReference type="InterPro" id="IPR016037">
    <property type="entry name" value="DHQ_synth_AroB"/>
</dbReference>
<dbReference type="InterPro" id="IPR030963">
    <property type="entry name" value="DHQ_synth_fam"/>
</dbReference>
<dbReference type="InterPro" id="IPR030960">
    <property type="entry name" value="DHQS/DOIS_N"/>
</dbReference>
<dbReference type="InterPro" id="IPR056179">
    <property type="entry name" value="DHQS_C"/>
</dbReference>
<dbReference type="NCBIfam" id="TIGR01357">
    <property type="entry name" value="aroB"/>
    <property type="match status" value="1"/>
</dbReference>
<dbReference type="PANTHER" id="PTHR43622">
    <property type="entry name" value="3-DEHYDROQUINATE SYNTHASE"/>
    <property type="match status" value="1"/>
</dbReference>
<dbReference type="PANTHER" id="PTHR43622:SF7">
    <property type="entry name" value="3-DEHYDROQUINATE SYNTHASE, CHLOROPLASTIC"/>
    <property type="match status" value="1"/>
</dbReference>
<dbReference type="Pfam" id="PF01761">
    <property type="entry name" value="DHQ_synthase"/>
    <property type="match status" value="1"/>
</dbReference>
<dbReference type="Pfam" id="PF24621">
    <property type="entry name" value="DHQS_C"/>
    <property type="match status" value="1"/>
</dbReference>
<dbReference type="PIRSF" id="PIRSF001455">
    <property type="entry name" value="DHQ_synth"/>
    <property type="match status" value="1"/>
</dbReference>
<dbReference type="SUPFAM" id="SSF56796">
    <property type="entry name" value="Dehydroquinate synthase-like"/>
    <property type="match status" value="1"/>
</dbReference>
<name>AROB_BACMK</name>
<keyword id="KW-0028">Amino-acid biosynthesis</keyword>
<keyword id="KW-0057">Aromatic amino acid biosynthesis</keyword>
<keyword id="KW-0170">Cobalt</keyword>
<keyword id="KW-0963">Cytoplasm</keyword>
<keyword id="KW-0456">Lyase</keyword>
<keyword id="KW-0479">Metal-binding</keyword>
<keyword id="KW-0520">NAD</keyword>
<keyword id="KW-0547">Nucleotide-binding</keyword>
<keyword id="KW-0862">Zinc</keyword>
<protein>
    <recommendedName>
        <fullName evidence="1">3-dehydroquinate synthase</fullName>
        <shortName evidence="1">DHQS</shortName>
        <ecNumber evidence="1">4.2.3.4</ecNumber>
    </recommendedName>
</protein>
<organism>
    <name type="scientific">Bacillus mycoides (strain KBAB4)</name>
    <name type="common">Bacillus weihenstephanensis</name>
    <dbReference type="NCBI Taxonomy" id="315730"/>
    <lineage>
        <taxon>Bacteria</taxon>
        <taxon>Bacillati</taxon>
        <taxon>Bacillota</taxon>
        <taxon>Bacilli</taxon>
        <taxon>Bacillales</taxon>
        <taxon>Bacillaceae</taxon>
        <taxon>Bacillus</taxon>
        <taxon>Bacillus cereus group</taxon>
    </lineage>
</organism>
<proteinExistence type="inferred from homology"/>
<feature type="chain" id="PRO_1000094459" description="3-dehydroquinate synthase">
    <location>
        <begin position="1"/>
        <end position="361"/>
    </location>
</feature>
<feature type="binding site" evidence="1">
    <location>
        <begin position="72"/>
        <end position="77"/>
    </location>
    <ligand>
        <name>NAD(+)</name>
        <dbReference type="ChEBI" id="CHEBI:57540"/>
    </ligand>
</feature>
<feature type="binding site" evidence="1">
    <location>
        <begin position="130"/>
        <end position="131"/>
    </location>
    <ligand>
        <name>NAD(+)</name>
        <dbReference type="ChEBI" id="CHEBI:57540"/>
    </ligand>
</feature>
<feature type="binding site" evidence="1">
    <location>
        <position position="142"/>
    </location>
    <ligand>
        <name>NAD(+)</name>
        <dbReference type="ChEBI" id="CHEBI:57540"/>
    </ligand>
</feature>
<feature type="binding site" evidence="1">
    <location>
        <position position="151"/>
    </location>
    <ligand>
        <name>NAD(+)</name>
        <dbReference type="ChEBI" id="CHEBI:57540"/>
    </ligand>
</feature>
<feature type="binding site" evidence="1">
    <location>
        <position position="184"/>
    </location>
    <ligand>
        <name>Zn(2+)</name>
        <dbReference type="ChEBI" id="CHEBI:29105"/>
    </ligand>
</feature>
<feature type="binding site" evidence="1">
    <location>
        <position position="247"/>
    </location>
    <ligand>
        <name>Zn(2+)</name>
        <dbReference type="ChEBI" id="CHEBI:29105"/>
    </ligand>
</feature>
<feature type="binding site" evidence="1">
    <location>
        <position position="264"/>
    </location>
    <ligand>
        <name>Zn(2+)</name>
        <dbReference type="ChEBI" id="CHEBI:29105"/>
    </ligand>
</feature>
<reference key="1">
    <citation type="journal article" date="2008" name="Chem. Biol. Interact.">
        <title>Extending the Bacillus cereus group genomics to putative food-borne pathogens of different toxicity.</title>
        <authorList>
            <person name="Lapidus A."/>
            <person name="Goltsman E."/>
            <person name="Auger S."/>
            <person name="Galleron N."/>
            <person name="Segurens B."/>
            <person name="Dossat C."/>
            <person name="Land M.L."/>
            <person name="Broussolle V."/>
            <person name="Brillard J."/>
            <person name="Guinebretiere M.-H."/>
            <person name="Sanchis V."/>
            <person name="Nguen-the C."/>
            <person name="Lereclus D."/>
            <person name="Richardson P."/>
            <person name="Wincker P."/>
            <person name="Weissenbach J."/>
            <person name="Ehrlich S.D."/>
            <person name="Sorokin A."/>
        </authorList>
    </citation>
    <scope>NUCLEOTIDE SEQUENCE [LARGE SCALE GENOMIC DNA]</scope>
    <source>
        <strain>KBAB4</strain>
    </source>
</reference>
<gene>
    <name evidence="1" type="primary">aroB</name>
    <name type="ordered locus">BcerKBAB4_1441</name>
</gene>